<accession>A1KGI6</accession>
<comment type="function">
    <text evidence="1">Protein S19 forms a complex with S13 that binds strongly to the 16S ribosomal RNA.</text>
</comment>
<comment type="similarity">
    <text evidence="1">Belongs to the universal ribosomal protein uS19 family.</text>
</comment>
<dbReference type="EMBL" id="AM408590">
    <property type="protein sequence ID" value="CAL70741.1"/>
    <property type="molecule type" value="Genomic_DNA"/>
</dbReference>
<dbReference type="RefSeq" id="WP_003403584.1">
    <property type="nucleotide sequence ID" value="NC_008769.1"/>
</dbReference>
<dbReference type="SMR" id="A1KGI6"/>
<dbReference type="GeneID" id="45424670"/>
<dbReference type="KEGG" id="mbb:BCG_0755"/>
<dbReference type="HOGENOM" id="CLU_144911_0_1_11"/>
<dbReference type="Proteomes" id="UP000001472">
    <property type="component" value="Chromosome"/>
</dbReference>
<dbReference type="GO" id="GO:0005737">
    <property type="term" value="C:cytoplasm"/>
    <property type="evidence" value="ECO:0007669"/>
    <property type="project" value="UniProtKB-ARBA"/>
</dbReference>
<dbReference type="GO" id="GO:0015935">
    <property type="term" value="C:small ribosomal subunit"/>
    <property type="evidence" value="ECO:0007669"/>
    <property type="project" value="InterPro"/>
</dbReference>
<dbReference type="GO" id="GO:0019843">
    <property type="term" value="F:rRNA binding"/>
    <property type="evidence" value="ECO:0007669"/>
    <property type="project" value="UniProtKB-UniRule"/>
</dbReference>
<dbReference type="GO" id="GO:0003735">
    <property type="term" value="F:structural constituent of ribosome"/>
    <property type="evidence" value="ECO:0007669"/>
    <property type="project" value="InterPro"/>
</dbReference>
<dbReference type="GO" id="GO:0000028">
    <property type="term" value="P:ribosomal small subunit assembly"/>
    <property type="evidence" value="ECO:0007669"/>
    <property type="project" value="TreeGrafter"/>
</dbReference>
<dbReference type="GO" id="GO:0006412">
    <property type="term" value="P:translation"/>
    <property type="evidence" value="ECO:0007669"/>
    <property type="project" value="UniProtKB-UniRule"/>
</dbReference>
<dbReference type="FunFam" id="3.30.860.10:FF:000001">
    <property type="entry name" value="30S ribosomal protein S19"/>
    <property type="match status" value="1"/>
</dbReference>
<dbReference type="Gene3D" id="3.30.860.10">
    <property type="entry name" value="30s Ribosomal Protein S19, Chain A"/>
    <property type="match status" value="1"/>
</dbReference>
<dbReference type="HAMAP" id="MF_00531">
    <property type="entry name" value="Ribosomal_uS19"/>
    <property type="match status" value="1"/>
</dbReference>
<dbReference type="InterPro" id="IPR002222">
    <property type="entry name" value="Ribosomal_uS19"/>
</dbReference>
<dbReference type="InterPro" id="IPR005732">
    <property type="entry name" value="Ribosomal_uS19_bac-type"/>
</dbReference>
<dbReference type="InterPro" id="IPR020934">
    <property type="entry name" value="Ribosomal_uS19_CS"/>
</dbReference>
<dbReference type="InterPro" id="IPR023575">
    <property type="entry name" value="Ribosomal_uS19_SF"/>
</dbReference>
<dbReference type="NCBIfam" id="TIGR01050">
    <property type="entry name" value="rpsS_bact"/>
    <property type="match status" value="1"/>
</dbReference>
<dbReference type="PANTHER" id="PTHR11880">
    <property type="entry name" value="RIBOSOMAL PROTEIN S19P FAMILY MEMBER"/>
    <property type="match status" value="1"/>
</dbReference>
<dbReference type="PANTHER" id="PTHR11880:SF8">
    <property type="entry name" value="SMALL RIBOSOMAL SUBUNIT PROTEIN US19M"/>
    <property type="match status" value="1"/>
</dbReference>
<dbReference type="Pfam" id="PF00203">
    <property type="entry name" value="Ribosomal_S19"/>
    <property type="match status" value="1"/>
</dbReference>
<dbReference type="PIRSF" id="PIRSF002144">
    <property type="entry name" value="Ribosomal_S19"/>
    <property type="match status" value="1"/>
</dbReference>
<dbReference type="PRINTS" id="PR00975">
    <property type="entry name" value="RIBOSOMALS19"/>
</dbReference>
<dbReference type="SUPFAM" id="SSF54570">
    <property type="entry name" value="Ribosomal protein S19"/>
    <property type="match status" value="1"/>
</dbReference>
<dbReference type="PROSITE" id="PS00323">
    <property type="entry name" value="RIBOSOMAL_S19"/>
    <property type="match status" value="1"/>
</dbReference>
<name>RS19_MYCBP</name>
<gene>
    <name evidence="1" type="primary">rpsS</name>
    <name type="ordered locus">BCG_0755</name>
</gene>
<feature type="chain" id="PRO_1000051078" description="Small ribosomal subunit protein uS19">
    <location>
        <begin position="1"/>
        <end position="93"/>
    </location>
</feature>
<organism>
    <name type="scientific">Mycobacterium bovis (strain BCG / Pasteur 1173P2)</name>
    <dbReference type="NCBI Taxonomy" id="410289"/>
    <lineage>
        <taxon>Bacteria</taxon>
        <taxon>Bacillati</taxon>
        <taxon>Actinomycetota</taxon>
        <taxon>Actinomycetes</taxon>
        <taxon>Mycobacteriales</taxon>
        <taxon>Mycobacteriaceae</taxon>
        <taxon>Mycobacterium</taxon>
        <taxon>Mycobacterium tuberculosis complex</taxon>
    </lineage>
</organism>
<proteinExistence type="inferred from homology"/>
<protein>
    <recommendedName>
        <fullName evidence="1">Small ribosomal subunit protein uS19</fullName>
    </recommendedName>
    <alternativeName>
        <fullName evidence="2">30S ribosomal protein S19</fullName>
    </alternativeName>
</protein>
<reference key="1">
    <citation type="journal article" date="2007" name="Proc. Natl. Acad. Sci. U.S.A.">
        <title>Genome plasticity of BCG and impact on vaccine efficacy.</title>
        <authorList>
            <person name="Brosch R."/>
            <person name="Gordon S.V."/>
            <person name="Garnier T."/>
            <person name="Eiglmeier K."/>
            <person name="Frigui W."/>
            <person name="Valenti P."/>
            <person name="Dos Santos S."/>
            <person name="Duthoy S."/>
            <person name="Lacroix C."/>
            <person name="Garcia-Pelayo C."/>
            <person name="Inwald J.K."/>
            <person name="Golby P."/>
            <person name="Garcia J.N."/>
            <person name="Hewinson R.G."/>
            <person name="Behr M.A."/>
            <person name="Quail M.A."/>
            <person name="Churcher C."/>
            <person name="Barrell B.G."/>
            <person name="Parkhill J."/>
            <person name="Cole S.T."/>
        </authorList>
    </citation>
    <scope>NUCLEOTIDE SEQUENCE [LARGE SCALE GENOMIC DNA]</scope>
    <source>
        <strain>BCG / Pasteur 1173P2</strain>
    </source>
</reference>
<sequence>MPRSLKKGPFVDEHLLKKVDVQNEKNTKQVIKTWSRRSTIIPDFIGHTFAVHDGRKHVPVFVTESMVGHKLGEFAPTRTFKGHIKDDRKSKRR</sequence>
<keyword id="KW-0687">Ribonucleoprotein</keyword>
<keyword id="KW-0689">Ribosomal protein</keyword>
<keyword id="KW-0694">RNA-binding</keyword>
<keyword id="KW-0699">rRNA-binding</keyword>
<evidence type="ECO:0000255" key="1">
    <source>
        <dbReference type="HAMAP-Rule" id="MF_00531"/>
    </source>
</evidence>
<evidence type="ECO:0000305" key="2"/>